<keyword id="KW-0328">Glycosyltransferase</keyword>
<keyword id="KW-1185">Reference proteome</keyword>
<keyword id="KW-0808">Transferase</keyword>
<dbReference type="EC" id="2.4.2.1" evidence="2"/>
<dbReference type="EMBL" id="BA000003">
    <property type="protein sequence ID" value="BAB13233.1"/>
    <property type="molecule type" value="Genomic_DNA"/>
</dbReference>
<dbReference type="RefSeq" id="NP_240347.1">
    <property type="nucleotide sequence ID" value="NC_002528.1"/>
</dbReference>
<dbReference type="RefSeq" id="WP_010896154.1">
    <property type="nucleotide sequence ID" value="NZ_AP036055.1"/>
</dbReference>
<dbReference type="SMR" id="P57606"/>
<dbReference type="STRING" id="563178.BUAP5A_534"/>
<dbReference type="EnsemblBacteria" id="BAB13233">
    <property type="protein sequence ID" value="BAB13233"/>
    <property type="gene ID" value="BAB13233"/>
</dbReference>
<dbReference type="KEGG" id="buc:BU541"/>
<dbReference type="PATRIC" id="fig|107806.10.peg.545"/>
<dbReference type="eggNOG" id="COG0813">
    <property type="taxonomic scope" value="Bacteria"/>
</dbReference>
<dbReference type="HOGENOM" id="CLU_068457_2_0_6"/>
<dbReference type="Proteomes" id="UP000001806">
    <property type="component" value="Chromosome"/>
</dbReference>
<dbReference type="GO" id="GO:0005829">
    <property type="term" value="C:cytosol"/>
    <property type="evidence" value="ECO:0007669"/>
    <property type="project" value="TreeGrafter"/>
</dbReference>
<dbReference type="GO" id="GO:0004731">
    <property type="term" value="F:purine-nucleoside phosphorylase activity"/>
    <property type="evidence" value="ECO:0007669"/>
    <property type="project" value="UniProtKB-UniRule"/>
</dbReference>
<dbReference type="GO" id="GO:0006152">
    <property type="term" value="P:purine nucleoside catabolic process"/>
    <property type="evidence" value="ECO:0007669"/>
    <property type="project" value="TreeGrafter"/>
</dbReference>
<dbReference type="CDD" id="cd09006">
    <property type="entry name" value="PNP_EcPNPI-like"/>
    <property type="match status" value="1"/>
</dbReference>
<dbReference type="Gene3D" id="3.40.50.1580">
    <property type="entry name" value="Nucleoside phosphorylase domain"/>
    <property type="match status" value="1"/>
</dbReference>
<dbReference type="HAMAP" id="MF_01627">
    <property type="entry name" value="Pur_nucleosid_phosp"/>
    <property type="match status" value="1"/>
</dbReference>
<dbReference type="InterPro" id="IPR004402">
    <property type="entry name" value="DeoD-type"/>
</dbReference>
<dbReference type="InterPro" id="IPR018016">
    <property type="entry name" value="Nucleoside_phosphorylase_CS"/>
</dbReference>
<dbReference type="InterPro" id="IPR000845">
    <property type="entry name" value="Nucleoside_phosphorylase_d"/>
</dbReference>
<dbReference type="InterPro" id="IPR035994">
    <property type="entry name" value="Nucleoside_phosphorylase_sf"/>
</dbReference>
<dbReference type="NCBIfam" id="TIGR00107">
    <property type="entry name" value="deoD"/>
    <property type="match status" value="1"/>
</dbReference>
<dbReference type="NCBIfam" id="NF004489">
    <property type="entry name" value="PRK05819.1"/>
    <property type="match status" value="1"/>
</dbReference>
<dbReference type="PANTHER" id="PTHR43691:SF11">
    <property type="entry name" value="FI09636P-RELATED"/>
    <property type="match status" value="1"/>
</dbReference>
<dbReference type="PANTHER" id="PTHR43691">
    <property type="entry name" value="URIDINE PHOSPHORYLASE"/>
    <property type="match status" value="1"/>
</dbReference>
<dbReference type="Pfam" id="PF01048">
    <property type="entry name" value="PNP_UDP_1"/>
    <property type="match status" value="1"/>
</dbReference>
<dbReference type="SUPFAM" id="SSF53167">
    <property type="entry name" value="Purine and uridine phosphorylases"/>
    <property type="match status" value="1"/>
</dbReference>
<dbReference type="PROSITE" id="PS01232">
    <property type="entry name" value="PNP_UDP_1"/>
    <property type="match status" value="1"/>
</dbReference>
<protein>
    <recommendedName>
        <fullName evidence="2">Purine nucleoside phosphorylase DeoD-type</fullName>
        <shortName evidence="2">PNP</shortName>
        <ecNumber evidence="2">2.4.2.1</ecNumber>
    </recommendedName>
</protein>
<proteinExistence type="inferred from homology"/>
<name>DEOD_BUCAI</name>
<evidence type="ECO:0000250" key="1">
    <source>
        <dbReference type="UniProtKB" id="P50389"/>
    </source>
</evidence>
<evidence type="ECO:0000255" key="2">
    <source>
        <dbReference type="HAMAP-Rule" id="MF_01627"/>
    </source>
</evidence>
<organism>
    <name type="scientific">Buchnera aphidicola subsp. Acyrthosiphon pisum (strain APS)</name>
    <name type="common">Acyrthosiphon pisum symbiotic bacterium</name>
    <dbReference type="NCBI Taxonomy" id="107806"/>
    <lineage>
        <taxon>Bacteria</taxon>
        <taxon>Pseudomonadati</taxon>
        <taxon>Pseudomonadota</taxon>
        <taxon>Gammaproteobacteria</taxon>
        <taxon>Enterobacterales</taxon>
        <taxon>Erwiniaceae</taxon>
        <taxon>Buchnera</taxon>
    </lineage>
</organism>
<reference key="1">
    <citation type="journal article" date="2000" name="Nature">
        <title>Genome sequence of the endocellular bacterial symbiont of aphids Buchnera sp. APS.</title>
        <authorList>
            <person name="Shigenobu S."/>
            <person name="Watanabe H."/>
            <person name="Hattori M."/>
            <person name="Sakaki Y."/>
            <person name="Ishikawa H."/>
        </authorList>
    </citation>
    <scope>NUCLEOTIDE SEQUENCE [LARGE SCALE GENOMIC DNA]</scope>
    <source>
        <strain>APS</strain>
    </source>
</reference>
<accession>P57606</accession>
<feature type="chain" id="PRO_0000063123" description="Purine nucleoside phosphorylase DeoD-type">
    <location>
        <begin position="1"/>
        <end position="234"/>
    </location>
</feature>
<feature type="active site" description="Proton donor" evidence="2">
    <location>
        <position position="205"/>
    </location>
</feature>
<feature type="binding site" evidence="1">
    <location>
        <position position="5"/>
    </location>
    <ligand>
        <name>a purine D-ribonucleoside</name>
        <dbReference type="ChEBI" id="CHEBI:142355"/>
        <note>ligand shared between dimeric partners</note>
    </ligand>
</feature>
<feature type="binding site" description="in other chain" evidence="1">
    <location>
        <position position="21"/>
    </location>
    <ligand>
        <name>phosphate</name>
        <dbReference type="ChEBI" id="CHEBI:43474"/>
        <note>ligand shared between dimeric partners</note>
    </ligand>
</feature>
<feature type="binding site" description="in other chain" evidence="1">
    <location>
        <position position="25"/>
    </location>
    <ligand>
        <name>phosphate</name>
        <dbReference type="ChEBI" id="CHEBI:43474"/>
        <note>ligand shared between dimeric partners</note>
    </ligand>
</feature>
<feature type="binding site" evidence="1">
    <location>
        <position position="44"/>
    </location>
    <ligand>
        <name>phosphate</name>
        <dbReference type="ChEBI" id="CHEBI:43474"/>
        <note>ligand shared between dimeric partners</note>
    </ligand>
</feature>
<feature type="binding site" description="in other chain" evidence="1">
    <location>
        <begin position="88"/>
        <end position="91"/>
    </location>
    <ligand>
        <name>phosphate</name>
        <dbReference type="ChEBI" id="CHEBI:43474"/>
        <note>ligand shared between dimeric partners</note>
    </ligand>
</feature>
<feature type="binding site" description="in other chain" evidence="1">
    <location>
        <begin position="180"/>
        <end position="182"/>
    </location>
    <ligand>
        <name>a purine D-ribonucleoside</name>
        <dbReference type="ChEBI" id="CHEBI:142355"/>
        <note>ligand shared between dimeric partners</note>
    </ligand>
</feature>
<feature type="binding site" description="in other chain" evidence="1">
    <location>
        <begin position="204"/>
        <end position="205"/>
    </location>
    <ligand>
        <name>a purine D-ribonucleoside</name>
        <dbReference type="ChEBI" id="CHEBI:142355"/>
        <note>ligand shared between dimeric partners</note>
    </ligand>
</feature>
<feature type="site" description="Important for catalytic activity" evidence="2">
    <location>
        <position position="218"/>
    </location>
</feature>
<gene>
    <name evidence="2" type="primary">deoD</name>
    <name type="ordered locus">BU541</name>
</gene>
<comment type="function">
    <text evidence="2">Catalyzes the reversible phosphorolytic breakdown of the N-glycosidic bond in the beta-(deoxy)ribonucleoside molecules, with the formation of the corresponding free purine bases and pentose-1-phosphate.</text>
</comment>
<comment type="catalytic activity">
    <reaction evidence="2">
        <text>a purine D-ribonucleoside + phosphate = a purine nucleobase + alpha-D-ribose 1-phosphate</text>
        <dbReference type="Rhea" id="RHEA:19805"/>
        <dbReference type="ChEBI" id="CHEBI:26386"/>
        <dbReference type="ChEBI" id="CHEBI:43474"/>
        <dbReference type="ChEBI" id="CHEBI:57720"/>
        <dbReference type="ChEBI" id="CHEBI:142355"/>
        <dbReference type="EC" id="2.4.2.1"/>
    </reaction>
</comment>
<comment type="catalytic activity">
    <reaction evidence="2">
        <text>a purine 2'-deoxy-D-ribonucleoside + phosphate = a purine nucleobase + 2-deoxy-alpha-D-ribose 1-phosphate</text>
        <dbReference type="Rhea" id="RHEA:36431"/>
        <dbReference type="ChEBI" id="CHEBI:26386"/>
        <dbReference type="ChEBI" id="CHEBI:43474"/>
        <dbReference type="ChEBI" id="CHEBI:57259"/>
        <dbReference type="ChEBI" id="CHEBI:142361"/>
        <dbReference type="EC" id="2.4.2.1"/>
    </reaction>
</comment>
<comment type="subunit">
    <text evidence="2">Homohexamer; trimer of homodimers.</text>
</comment>
<comment type="similarity">
    <text evidence="2">Belongs to the PNP/UDP phosphorylase family.</text>
</comment>
<sequence>MSTPHINSKKDDFSDIVLMPGDPVRAKYIAEKYLSNFVQVNDTRLMLAYTGFYKNRKISIMSHGIGIPSASLYTRELIIEFNVKKIIRIGTCGAVRDDIKLRDIVISMGASTDSKVNRIRFNDHDFAAIADFDMIYNIVSISKKMKIKVSIGNFFTTDSFYNDDKKMLNILKKYNIIGVDMETAGIYGVASELKVQALSICTVSDHITNKEFLSSKERESSFNDMIELALESVL</sequence>